<comment type="function">
    <text evidence="1">Allows the formation of correctly charged Asn-tRNA(Asn) or Gln-tRNA(Gln) through the transamidation of misacylated Asp-tRNA(Asn) or Glu-tRNA(Gln) in organisms which lack either or both of asparaginyl-tRNA or glutaminyl-tRNA synthetases. The reaction takes place in the presence of glutamine and ATP through an activated phospho-Asp-tRNA(Asn) or phospho-Glu-tRNA(Gln).</text>
</comment>
<comment type="catalytic activity">
    <reaction evidence="1">
        <text>L-glutamyl-tRNA(Gln) + L-glutamine + ATP + H2O = L-glutaminyl-tRNA(Gln) + L-glutamate + ADP + phosphate + H(+)</text>
        <dbReference type="Rhea" id="RHEA:17521"/>
        <dbReference type="Rhea" id="RHEA-COMP:9681"/>
        <dbReference type="Rhea" id="RHEA-COMP:9684"/>
        <dbReference type="ChEBI" id="CHEBI:15377"/>
        <dbReference type="ChEBI" id="CHEBI:15378"/>
        <dbReference type="ChEBI" id="CHEBI:29985"/>
        <dbReference type="ChEBI" id="CHEBI:30616"/>
        <dbReference type="ChEBI" id="CHEBI:43474"/>
        <dbReference type="ChEBI" id="CHEBI:58359"/>
        <dbReference type="ChEBI" id="CHEBI:78520"/>
        <dbReference type="ChEBI" id="CHEBI:78521"/>
        <dbReference type="ChEBI" id="CHEBI:456216"/>
    </reaction>
</comment>
<comment type="catalytic activity">
    <reaction evidence="1">
        <text>L-aspartyl-tRNA(Asn) + L-glutamine + ATP + H2O = L-asparaginyl-tRNA(Asn) + L-glutamate + ADP + phosphate + 2 H(+)</text>
        <dbReference type="Rhea" id="RHEA:14513"/>
        <dbReference type="Rhea" id="RHEA-COMP:9674"/>
        <dbReference type="Rhea" id="RHEA-COMP:9677"/>
        <dbReference type="ChEBI" id="CHEBI:15377"/>
        <dbReference type="ChEBI" id="CHEBI:15378"/>
        <dbReference type="ChEBI" id="CHEBI:29985"/>
        <dbReference type="ChEBI" id="CHEBI:30616"/>
        <dbReference type="ChEBI" id="CHEBI:43474"/>
        <dbReference type="ChEBI" id="CHEBI:58359"/>
        <dbReference type="ChEBI" id="CHEBI:78515"/>
        <dbReference type="ChEBI" id="CHEBI:78516"/>
        <dbReference type="ChEBI" id="CHEBI:456216"/>
    </reaction>
</comment>
<comment type="subunit">
    <text evidence="1">Heterotrimer of A, B and C subunits.</text>
</comment>
<comment type="similarity">
    <text evidence="1">Belongs to the GatC family.</text>
</comment>
<proteinExistence type="inferred from homology"/>
<sequence length="95" mass="10859">MKISKEEVAYVAHLARLEFSESEMETFTFQMNEILLYMDKLNEVDTSGVEPLSHAIALHNAFREDKVQESLSQDLSLANAPDPRGEFFRVPKVID</sequence>
<dbReference type="EC" id="6.3.5.-" evidence="1"/>
<dbReference type="EMBL" id="CP000252">
    <property type="protein sequence ID" value="ABC78844.1"/>
    <property type="molecule type" value="Genomic_DNA"/>
</dbReference>
<dbReference type="RefSeq" id="WP_011418860.1">
    <property type="nucleotide sequence ID" value="NC_007759.1"/>
</dbReference>
<dbReference type="SMR" id="Q2LXN4"/>
<dbReference type="STRING" id="56780.SYN_00307"/>
<dbReference type="KEGG" id="sat:SYN_00307"/>
<dbReference type="eggNOG" id="COG0721">
    <property type="taxonomic scope" value="Bacteria"/>
</dbReference>
<dbReference type="HOGENOM" id="CLU_105899_6_1_7"/>
<dbReference type="InParanoid" id="Q2LXN4"/>
<dbReference type="OrthoDB" id="9813938at2"/>
<dbReference type="Proteomes" id="UP000001933">
    <property type="component" value="Chromosome"/>
</dbReference>
<dbReference type="GO" id="GO:0050566">
    <property type="term" value="F:asparaginyl-tRNA synthase (glutamine-hydrolyzing) activity"/>
    <property type="evidence" value="ECO:0007669"/>
    <property type="project" value="RHEA"/>
</dbReference>
<dbReference type="GO" id="GO:0005524">
    <property type="term" value="F:ATP binding"/>
    <property type="evidence" value="ECO:0007669"/>
    <property type="project" value="UniProtKB-KW"/>
</dbReference>
<dbReference type="GO" id="GO:0050567">
    <property type="term" value="F:glutaminyl-tRNA synthase (glutamine-hydrolyzing) activity"/>
    <property type="evidence" value="ECO:0007669"/>
    <property type="project" value="UniProtKB-UniRule"/>
</dbReference>
<dbReference type="GO" id="GO:0070681">
    <property type="term" value="P:glutaminyl-tRNAGln biosynthesis via transamidation"/>
    <property type="evidence" value="ECO:0007669"/>
    <property type="project" value="TreeGrafter"/>
</dbReference>
<dbReference type="GO" id="GO:0006450">
    <property type="term" value="P:regulation of translational fidelity"/>
    <property type="evidence" value="ECO:0007669"/>
    <property type="project" value="InterPro"/>
</dbReference>
<dbReference type="GO" id="GO:0006412">
    <property type="term" value="P:translation"/>
    <property type="evidence" value="ECO:0007669"/>
    <property type="project" value="UniProtKB-UniRule"/>
</dbReference>
<dbReference type="Gene3D" id="1.10.20.60">
    <property type="entry name" value="Glu-tRNAGln amidotransferase C subunit, N-terminal domain"/>
    <property type="match status" value="1"/>
</dbReference>
<dbReference type="HAMAP" id="MF_00122">
    <property type="entry name" value="GatC"/>
    <property type="match status" value="1"/>
</dbReference>
<dbReference type="InterPro" id="IPR036113">
    <property type="entry name" value="Asp/Glu-ADT_sf_sub_c"/>
</dbReference>
<dbReference type="InterPro" id="IPR003837">
    <property type="entry name" value="GatC"/>
</dbReference>
<dbReference type="NCBIfam" id="TIGR00135">
    <property type="entry name" value="gatC"/>
    <property type="match status" value="1"/>
</dbReference>
<dbReference type="PANTHER" id="PTHR15004">
    <property type="entry name" value="GLUTAMYL-TRNA(GLN) AMIDOTRANSFERASE SUBUNIT C, MITOCHONDRIAL"/>
    <property type="match status" value="1"/>
</dbReference>
<dbReference type="PANTHER" id="PTHR15004:SF0">
    <property type="entry name" value="GLUTAMYL-TRNA(GLN) AMIDOTRANSFERASE SUBUNIT C, MITOCHONDRIAL"/>
    <property type="match status" value="1"/>
</dbReference>
<dbReference type="Pfam" id="PF02686">
    <property type="entry name" value="GatC"/>
    <property type="match status" value="1"/>
</dbReference>
<dbReference type="SUPFAM" id="SSF141000">
    <property type="entry name" value="Glu-tRNAGln amidotransferase C subunit"/>
    <property type="match status" value="1"/>
</dbReference>
<protein>
    <recommendedName>
        <fullName evidence="1">Aspartyl/glutamyl-tRNA(Asn/Gln) amidotransferase subunit C</fullName>
        <shortName evidence="1">Asp/Glu-ADT subunit C</shortName>
        <ecNumber evidence="1">6.3.5.-</ecNumber>
    </recommendedName>
</protein>
<feature type="chain" id="PRO_1000016228" description="Aspartyl/glutamyl-tRNA(Asn/Gln) amidotransferase subunit C">
    <location>
        <begin position="1"/>
        <end position="95"/>
    </location>
</feature>
<accession>Q2LXN4</accession>
<name>GATC_SYNAS</name>
<keyword id="KW-0067">ATP-binding</keyword>
<keyword id="KW-0436">Ligase</keyword>
<keyword id="KW-0547">Nucleotide-binding</keyword>
<keyword id="KW-0648">Protein biosynthesis</keyword>
<keyword id="KW-1185">Reference proteome</keyword>
<gene>
    <name evidence="1" type="primary">gatC</name>
    <name type="ordered locus">SYNAS_29650</name>
    <name type="ORF">SYN_00307</name>
</gene>
<organism>
    <name type="scientific">Syntrophus aciditrophicus (strain SB)</name>
    <dbReference type="NCBI Taxonomy" id="56780"/>
    <lineage>
        <taxon>Bacteria</taxon>
        <taxon>Pseudomonadati</taxon>
        <taxon>Thermodesulfobacteriota</taxon>
        <taxon>Syntrophia</taxon>
        <taxon>Syntrophales</taxon>
        <taxon>Syntrophaceae</taxon>
        <taxon>Syntrophus</taxon>
    </lineage>
</organism>
<evidence type="ECO:0000255" key="1">
    <source>
        <dbReference type="HAMAP-Rule" id="MF_00122"/>
    </source>
</evidence>
<reference key="1">
    <citation type="journal article" date="2007" name="Proc. Natl. Acad. Sci. U.S.A.">
        <title>The genome of Syntrophus aciditrophicus: life at the thermodynamic limit of microbial growth.</title>
        <authorList>
            <person name="McInerney M.J."/>
            <person name="Rohlin L."/>
            <person name="Mouttaki H."/>
            <person name="Kim U."/>
            <person name="Krupp R.S."/>
            <person name="Rios-Hernandez L."/>
            <person name="Sieber J."/>
            <person name="Struchtemeyer C.G."/>
            <person name="Bhattacharyya A."/>
            <person name="Campbell J.W."/>
            <person name="Gunsalus R.P."/>
        </authorList>
    </citation>
    <scope>NUCLEOTIDE SEQUENCE [LARGE SCALE GENOMIC DNA]</scope>
    <source>
        <strain>SB</strain>
    </source>
</reference>